<protein>
    <recommendedName>
        <fullName>Oleate-activated transcription factor 1</fullName>
    </recommendedName>
</protein>
<comment type="function">
    <text evidence="3 6 7 8">The PIP2-OAF1 heterodimer acts as a transcriptional activator to induce the transcription of genes encoding proteins involved in fatty acid beta-oxidation, a response called oleic acid induction, when cells grow on fatty acids as sole carbon source. Recognizes and binds to the oleate response element (ORE) (or peroxisome box), two inverted CGG triplets spaced by 14 to 18 intervening nucleotides, in the promoter region of a number of genes (such as CTA1, FOX1 to FOX3, FAA2, PAS8, PAS10, etc.) for peroxisomal proteins. OAF1 acts as the sensor for oleate and inhibits PIP2 activity under non-inducing conditions. Activity is repressed by glucose.</text>
</comment>
<comment type="subunit">
    <text>Heterodimer of PIP2 and OAF1.</text>
</comment>
<comment type="subcellular location">
    <subcellularLocation>
        <location>Nucleus</location>
    </subcellularLocation>
</comment>
<comment type="domain">
    <text evidence="5">The 9aaTAD motif (residues 1034 to 1042) is a transactivation domain present in a large number of yeast and animal transcription factors.</text>
</comment>
<comment type="miscellaneous">
    <text evidence="4">Present with 92 molecules/cell in log phase SD medium.</text>
</comment>
<sequence length="1047" mass="118891">MVENSTQKAPHAGNDDNSSTKPYSEAFFLGFNNPTPGLEAEHSSTSPAPENSETHNRKRNRILFVCQACRKSKTKCDREKPECGRCVKHGLKCVYDVSKQPAPRIPSKDAIISRLEKDMFYWKDKAMKLLTEREVNESGKRSASPINTNNASGDSPDTKKQHKMEPIYEQSGNGDINNGTRNDIEINLYRSHPTMIMSKVMKREVKPLSENYIIIQDCFLKILVTSVFLDTSKNTMIPALTANANITRAQPSVANNLLKLKEMLIRQCQTEDEKNRVNEFTDRILQNTNSNRNLKIGMLLSMLYNSVGYQYLEDHCPQGGEYSDLLRNLINECEAILPSYEIIERYKNHFYEYVYPSLPFIELEIFEESLSQTIFPDPNNPSKVQIRMGSTHLRAKVENLSLLLVILKLSYMSIRFLDHSTADSSFYLSKEIIDKYPIPNDFILLSQRCLASENWCACANENIISCLLYIWSFFAFSPEEGDFFLEHPTDVISSLIMMLSTSIGLHRDPSDFPQLISPSTSDKRTLNHRRILWLSIVTVCSFEASLKGRHSVSPISLMALFLNIKDPDSLTVYMNRVRGDLSDINNHKLLRIHKFTFKRAQLALLLSDLDNLTMTYYGSFHLHSIEFIREKIEIFVEENFPIVPLKSVAQDKSDLDDMNVISEMNILSSENSSSFHNRIMNKLLMLRTSMAVFLHFETLITKDKSIFPFYKKYFMVSCMDALSLINYFNKFFNGEYRHAISSLTSFNVTKFIQLALSSTIFSLLGIILRIGLAIHMLSSEVQKLSGTTDPRIKELNTKVEKFSTLQRDLESALEGIYCSASEHLRFTYFPVFKMLALFDVIVQRMRKGELWHGIFTMIQMEQMHSRIIKTLSITLGVKLDKKDRLLEELMACNHVANFSVEDIDELNRNIKKEIQISSGLKPPVNTIDLTNGEPFGNAVPTFTKTWSSSLDNLEKLSSAAAVGQSLDYNSGLRQGPLAGGGSKEQTPIAGMNNLNNSINATPIVDNSSGSQLPNGFDRGQANNTPFPGYFGGLDLFDYDFLFGNDFA</sequence>
<dbReference type="EMBL" id="U12980">
    <property type="protein sequence ID" value="AAC04981.2"/>
    <property type="molecule type" value="Genomic_DNA"/>
</dbReference>
<dbReference type="EMBL" id="BK006935">
    <property type="protein sequence ID" value="DAA06936.2"/>
    <property type="molecule type" value="Genomic_DNA"/>
</dbReference>
<dbReference type="PIR" id="S51969">
    <property type="entry name" value="S51969"/>
</dbReference>
<dbReference type="RefSeq" id="NP_009349.3">
    <property type="nucleotide sequence ID" value="NM_001178195.2"/>
</dbReference>
<dbReference type="BioGRID" id="31777">
    <property type="interactions" value="87"/>
</dbReference>
<dbReference type="ComplexPortal" id="CPX-1038">
    <property type="entry name" value="PIP2-OAF1 transcription factor complex"/>
</dbReference>
<dbReference type="DIP" id="DIP-5928N"/>
<dbReference type="FunCoup" id="P39720">
    <property type="interactions" value="1035"/>
</dbReference>
<dbReference type="IntAct" id="P39720">
    <property type="interactions" value="4"/>
</dbReference>
<dbReference type="MINT" id="P39720"/>
<dbReference type="STRING" id="4932.YAL051W"/>
<dbReference type="iPTMnet" id="P39720"/>
<dbReference type="PaxDb" id="4932-YAL051W"/>
<dbReference type="PeptideAtlas" id="P39720"/>
<dbReference type="EnsemblFungi" id="YAL051W_mRNA">
    <property type="protein sequence ID" value="YAL051W"/>
    <property type="gene ID" value="YAL051W"/>
</dbReference>
<dbReference type="GeneID" id="851247"/>
<dbReference type="KEGG" id="sce:YAL051W"/>
<dbReference type="AGR" id="SGD:S000000048"/>
<dbReference type="SGD" id="S000000048">
    <property type="gene designation" value="OAF1"/>
</dbReference>
<dbReference type="VEuPathDB" id="FungiDB:YAL051W"/>
<dbReference type="eggNOG" id="ENOG502QW20">
    <property type="taxonomic scope" value="Eukaryota"/>
</dbReference>
<dbReference type="GeneTree" id="ENSGT00940000176335"/>
<dbReference type="HOGENOM" id="CLU_008453_0_0_1"/>
<dbReference type="InParanoid" id="P39720"/>
<dbReference type="OMA" id="CANENII"/>
<dbReference type="OrthoDB" id="5069333at2759"/>
<dbReference type="BioCyc" id="YEAST:G3O-28857-MONOMER"/>
<dbReference type="BioGRID-ORCS" id="851247">
    <property type="hits" value="6 hits in 13 CRISPR screens"/>
</dbReference>
<dbReference type="PRO" id="PR:P39720"/>
<dbReference type="Proteomes" id="UP000002311">
    <property type="component" value="Chromosome I"/>
</dbReference>
<dbReference type="RNAct" id="P39720">
    <property type="molecule type" value="protein"/>
</dbReference>
<dbReference type="GO" id="GO:0005634">
    <property type="term" value="C:nucleus"/>
    <property type="evidence" value="ECO:0000314"/>
    <property type="project" value="ComplexPortal"/>
</dbReference>
<dbReference type="GO" id="GO:0089716">
    <property type="term" value="C:Pip2-Oaf1 complex"/>
    <property type="evidence" value="ECO:0000314"/>
    <property type="project" value="SGD"/>
</dbReference>
<dbReference type="GO" id="GO:0005667">
    <property type="term" value="C:transcription regulator complex"/>
    <property type="evidence" value="ECO:0000353"/>
    <property type="project" value="ComplexPortal"/>
</dbReference>
<dbReference type="GO" id="GO:0001228">
    <property type="term" value="F:DNA-binding transcription activator activity, RNA polymerase II-specific"/>
    <property type="evidence" value="ECO:0000315"/>
    <property type="project" value="SGD"/>
</dbReference>
<dbReference type="GO" id="GO:0000981">
    <property type="term" value="F:DNA-binding transcription factor activity, RNA polymerase II-specific"/>
    <property type="evidence" value="ECO:0000318"/>
    <property type="project" value="GO_Central"/>
</dbReference>
<dbReference type="GO" id="GO:0043565">
    <property type="term" value="F:sequence-specific DNA binding"/>
    <property type="evidence" value="ECO:0007005"/>
    <property type="project" value="SGD"/>
</dbReference>
<dbReference type="GO" id="GO:0008270">
    <property type="term" value="F:zinc ion binding"/>
    <property type="evidence" value="ECO:0007669"/>
    <property type="project" value="InterPro"/>
</dbReference>
<dbReference type="GO" id="GO:0071400">
    <property type="term" value="P:cellular response to oleic acid"/>
    <property type="evidence" value="ECO:0000315"/>
    <property type="project" value="SGD"/>
</dbReference>
<dbReference type="GO" id="GO:0006631">
    <property type="term" value="P:fatty acid metabolic process"/>
    <property type="evidence" value="ECO:0000314"/>
    <property type="project" value="ComplexPortal"/>
</dbReference>
<dbReference type="GO" id="GO:0007031">
    <property type="term" value="P:peroxisome organization"/>
    <property type="evidence" value="ECO:0000303"/>
    <property type="project" value="ComplexPortal"/>
</dbReference>
<dbReference type="GO" id="GO:0032000">
    <property type="term" value="P:positive regulation of fatty acid beta-oxidation"/>
    <property type="evidence" value="ECO:0000315"/>
    <property type="project" value="SGD"/>
</dbReference>
<dbReference type="GO" id="GO:0045944">
    <property type="term" value="P:positive regulation of transcription by RNA polymerase II"/>
    <property type="evidence" value="ECO:0000315"/>
    <property type="project" value="SGD"/>
</dbReference>
<dbReference type="GO" id="GO:0006355">
    <property type="term" value="P:regulation of DNA-templated transcription"/>
    <property type="evidence" value="ECO:0000314"/>
    <property type="project" value="ComplexPortal"/>
</dbReference>
<dbReference type="GO" id="GO:0030435">
    <property type="term" value="P:sporulation resulting in formation of a cellular spore"/>
    <property type="evidence" value="ECO:0007669"/>
    <property type="project" value="UniProtKB-KW"/>
</dbReference>
<dbReference type="CDD" id="cd12148">
    <property type="entry name" value="fungal_TF_MHR"/>
    <property type="match status" value="1"/>
</dbReference>
<dbReference type="CDD" id="cd00067">
    <property type="entry name" value="GAL4"/>
    <property type="match status" value="1"/>
</dbReference>
<dbReference type="Gene3D" id="4.10.240.10">
    <property type="entry name" value="Zn(2)-C6 fungal-type DNA-binding domain"/>
    <property type="match status" value="1"/>
</dbReference>
<dbReference type="InterPro" id="IPR050675">
    <property type="entry name" value="OAF3"/>
</dbReference>
<dbReference type="InterPro" id="IPR036864">
    <property type="entry name" value="Zn2-C6_fun-type_DNA-bd_sf"/>
</dbReference>
<dbReference type="InterPro" id="IPR001138">
    <property type="entry name" value="Zn2Cys6_DnaBD"/>
</dbReference>
<dbReference type="PANTHER" id="PTHR31069">
    <property type="entry name" value="OLEATE-ACTIVATED TRANSCRIPTION FACTOR 1-RELATED"/>
    <property type="match status" value="1"/>
</dbReference>
<dbReference type="PANTHER" id="PTHR31069:SF29">
    <property type="entry name" value="OLEATE-ACTIVATED TRANSCRIPTION FACTOR 1-RELATED"/>
    <property type="match status" value="1"/>
</dbReference>
<dbReference type="Pfam" id="PF00172">
    <property type="entry name" value="Zn_clus"/>
    <property type="match status" value="1"/>
</dbReference>
<dbReference type="PRINTS" id="PR00755">
    <property type="entry name" value="AFLATOXINBRP"/>
</dbReference>
<dbReference type="SMART" id="SM00066">
    <property type="entry name" value="GAL4"/>
    <property type="match status" value="1"/>
</dbReference>
<dbReference type="SUPFAM" id="SSF57701">
    <property type="entry name" value="Zn2/Cys6 DNA-binding domain"/>
    <property type="match status" value="1"/>
</dbReference>
<dbReference type="PROSITE" id="PS00463">
    <property type="entry name" value="ZN2_CY6_FUNGAL_1"/>
    <property type="match status" value="1"/>
</dbReference>
<dbReference type="PROSITE" id="PS50048">
    <property type="entry name" value="ZN2_CY6_FUNGAL_2"/>
    <property type="match status" value="1"/>
</dbReference>
<feature type="chain" id="PRO_0000114990" description="Oleate-activated transcription factor 1">
    <location>
        <begin position="1"/>
        <end position="1047"/>
    </location>
</feature>
<feature type="DNA-binding region" description="Zn(2)-C6 fungal-type" evidence="1">
    <location>
        <begin position="66"/>
        <end position="93"/>
    </location>
</feature>
<feature type="region of interest" description="Disordered" evidence="2">
    <location>
        <begin position="1"/>
        <end position="56"/>
    </location>
</feature>
<feature type="region of interest" description="Disordered" evidence="2">
    <location>
        <begin position="133"/>
        <end position="163"/>
    </location>
</feature>
<feature type="short sequence motif" description="9aaTAD">
    <location>
        <begin position="1034"/>
        <end position="1042"/>
    </location>
</feature>
<feature type="compositionally biased region" description="Polar residues" evidence="2">
    <location>
        <begin position="144"/>
        <end position="155"/>
    </location>
</feature>
<feature type="modified residue" description="Phosphoserine" evidence="10">
    <location>
        <position position="155"/>
    </location>
</feature>
<feature type="sequence conflict" description="In Ref. 1; AAC04981." evidence="9" ref="1">
    <original>R</original>
    <variation>W</variation>
    <location>
        <position position="70"/>
    </location>
</feature>
<feature type="sequence conflict" description="In Ref. 1; AAC04981." evidence="9" ref="1">
    <original>Q</original>
    <variation>P</variation>
    <location>
        <position position="447"/>
    </location>
</feature>
<feature type="sequence conflict" description="In Ref. 1; AAC04981." evidence="9" ref="1">
    <original>K</original>
    <variation>T</variation>
    <location>
        <position position="588"/>
    </location>
</feature>
<proteinExistence type="evidence at protein level"/>
<evidence type="ECO:0000255" key="1">
    <source>
        <dbReference type="PROSITE-ProRule" id="PRU00227"/>
    </source>
</evidence>
<evidence type="ECO:0000256" key="2">
    <source>
        <dbReference type="SAM" id="MobiDB-lite"/>
    </source>
</evidence>
<evidence type="ECO:0000269" key="3">
    <source>
    </source>
</evidence>
<evidence type="ECO:0000269" key="4">
    <source>
    </source>
</evidence>
<evidence type="ECO:0000269" key="5">
    <source>
    </source>
</evidence>
<evidence type="ECO:0000269" key="6">
    <source>
    </source>
</evidence>
<evidence type="ECO:0000269" key="7">
    <source>
    </source>
</evidence>
<evidence type="ECO:0000269" key="8">
    <source>
    </source>
</evidence>
<evidence type="ECO:0000305" key="9"/>
<evidence type="ECO:0007744" key="10">
    <source>
    </source>
</evidence>
<keyword id="KW-0903">Direct protein sequencing</keyword>
<keyword id="KW-0238">DNA-binding</keyword>
<keyword id="KW-0479">Metal-binding</keyword>
<keyword id="KW-0539">Nucleus</keyword>
<keyword id="KW-0597">Phosphoprotein</keyword>
<keyword id="KW-1185">Reference proteome</keyword>
<keyword id="KW-0749">Sporulation</keyword>
<keyword id="KW-0804">Transcription</keyword>
<keyword id="KW-0805">Transcription regulation</keyword>
<keyword id="KW-0862">Zinc</keyword>
<accession>P39720</accession>
<accession>D6VPG6</accession>
<organism>
    <name type="scientific">Saccharomyces cerevisiae (strain ATCC 204508 / S288c)</name>
    <name type="common">Baker's yeast</name>
    <dbReference type="NCBI Taxonomy" id="559292"/>
    <lineage>
        <taxon>Eukaryota</taxon>
        <taxon>Fungi</taxon>
        <taxon>Dikarya</taxon>
        <taxon>Ascomycota</taxon>
        <taxon>Saccharomycotina</taxon>
        <taxon>Saccharomycetes</taxon>
        <taxon>Saccharomycetales</taxon>
        <taxon>Saccharomycetaceae</taxon>
        <taxon>Saccharomyces</taxon>
    </lineage>
</organism>
<gene>
    <name type="primary">OAF1</name>
    <name type="synonym">YAF1</name>
    <name type="ordered locus">YAL051W</name>
    <name type="ORF">FUN43</name>
</gene>
<reference key="1">
    <citation type="journal article" date="1995" name="Proc. Natl. Acad. Sci. U.S.A.">
        <title>The nucleotide sequence of chromosome I from Saccharomyces cerevisiae.</title>
        <authorList>
            <person name="Bussey H."/>
            <person name="Kaback D.B."/>
            <person name="Zhong W.-W."/>
            <person name="Vo D.H."/>
            <person name="Clark M.W."/>
            <person name="Fortin N."/>
            <person name="Hall J."/>
            <person name="Ouellette B.F.F."/>
            <person name="Keng T."/>
            <person name="Barton A.B."/>
            <person name="Su Y."/>
            <person name="Davies C.J."/>
            <person name="Storms R.K."/>
        </authorList>
    </citation>
    <scope>NUCLEOTIDE SEQUENCE [LARGE SCALE GENOMIC DNA]</scope>
    <source>
        <strain>ATCC 204508 / S288c</strain>
    </source>
</reference>
<reference key="2">
    <citation type="submission" date="2005-12" db="EMBL/GenBank/DDBJ databases">
        <authorList>
            <person name="Hong E.L."/>
            <person name="Cherry J.M."/>
        </authorList>
    </citation>
    <scope>SEQUENCE REVISION TO C-TERMINUS</scope>
</reference>
<reference key="3">
    <citation type="journal article" date="2014" name="G3 (Bethesda)">
        <title>The reference genome sequence of Saccharomyces cerevisiae: Then and now.</title>
        <authorList>
            <person name="Engel S.R."/>
            <person name="Dietrich F.S."/>
            <person name="Fisk D.G."/>
            <person name="Binkley G."/>
            <person name="Balakrishnan R."/>
            <person name="Costanzo M.C."/>
            <person name="Dwight S.S."/>
            <person name="Hitz B.C."/>
            <person name="Karra K."/>
            <person name="Nash R.S."/>
            <person name="Weng S."/>
            <person name="Wong E.D."/>
            <person name="Lloyd P."/>
            <person name="Skrzypek M.S."/>
            <person name="Miyasato S.R."/>
            <person name="Simison M."/>
            <person name="Cherry J.M."/>
        </authorList>
    </citation>
    <scope>GENOME REANNOTATION</scope>
    <scope>SEQUENCE REVISION TO 70; 447 AND 588</scope>
    <source>
        <strain>ATCC 204508 / S288c</strain>
    </source>
</reference>
<reference key="4">
    <citation type="journal article" date="1996" name="J. Biol. Chem.">
        <title>Purification, identification, and properties of a Saccharomyces cerevisiae oleate-activated upstream activating sequence-binding protein that is involved in the activation of POX1.</title>
        <authorList>
            <person name="Luo Y."/>
            <person name="Karpichev I.V."/>
            <person name="Kohanski R.A."/>
            <person name="Small G.M."/>
        </authorList>
    </citation>
    <scope>PROTEIN SEQUENCE OF 118-122; 946-953 AND 959-970</scope>
    <scope>FUNCTION</scope>
    <scope>DNA-BINDING</scope>
</reference>
<reference key="5">
    <citation type="journal article" date="1997" name="Eur. J. Biochem.">
        <title>A heterodimer of the Zn2Cys6 transcription factors Pip2p and Oaf1p controls induction of genes encoding peroxisomal proteins in Saccharomyces cerevisiae.</title>
        <authorList>
            <person name="Rottensteiner H."/>
            <person name="Kal A.J."/>
            <person name="Hamilton B."/>
            <person name="Ruis H."/>
            <person name="Tabak H.F."/>
        </authorList>
    </citation>
    <scope>FUNCTION</scope>
    <scope>DNA-BINDING</scope>
    <scope>INTERACTION WITH PIP2</scope>
</reference>
<reference key="6">
    <citation type="journal article" date="1997" name="Mol. Cell. Biol.">
        <title>A complex containing two transcription factors regulates peroxisome proliferation and the coordinate induction of beta-oxidation enzymes in Saccharomyces cerevisiae.</title>
        <authorList>
            <person name="Karpichev I.V."/>
            <person name="Luo Y."/>
            <person name="Marians R.C."/>
            <person name="Small G.M."/>
        </authorList>
    </citation>
    <scope>FUNCTION</scope>
    <scope>INTERACTION WITH PIP2</scope>
    <scope>IDENTIFICATION OF FRAMESHIFT</scope>
</reference>
<reference key="7">
    <citation type="journal article" date="1999" name="J. Biol. Chem.">
        <title>Functional analysis of the Zn(2)Cys(6) transcription factors Oaf1p and Pip2p. Different roles in fatty acid induction of beta-oxidation in Saccharomyces cerevisiae.</title>
        <authorList>
            <person name="Baumgartner U."/>
            <person name="Hamilton B."/>
            <person name="Piskacek M."/>
            <person name="Ruis H."/>
            <person name="Rottensteiner H."/>
        </authorList>
    </citation>
    <scope>FUNCTION</scope>
</reference>
<reference key="8">
    <citation type="journal article" date="2003" name="Eur. J. Biochem.">
        <title>Saccharomyces cerevisiae Pip2p-Oaf1p regulates PEX25 transcription through an adenine-less ORE.</title>
        <authorList>
            <person name="Rottensteiner H."/>
            <person name="Hartig A."/>
            <person name="Hamilton B."/>
            <person name="Ruis H."/>
            <person name="Erdmann R."/>
            <person name="Gurvitz A."/>
        </authorList>
    </citation>
    <scope>DNA-BINDING</scope>
</reference>
<reference key="9">
    <citation type="journal article" date="2003" name="Nature">
        <title>Sequencing and comparison of yeast species to identify genes and regulatory elements.</title>
        <authorList>
            <person name="Kellis M."/>
            <person name="Patterson N."/>
            <person name="Endrizzi M."/>
            <person name="Birren B.W."/>
            <person name="Lander E.S."/>
        </authorList>
    </citation>
    <scope>IDENTIFICATION OF FRAMESHIFT</scope>
</reference>
<reference key="10">
    <citation type="journal article" date="2003" name="Nature">
        <title>Global analysis of protein expression in yeast.</title>
        <authorList>
            <person name="Ghaemmaghami S."/>
            <person name="Huh W.-K."/>
            <person name="Bower K."/>
            <person name="Howson R.W."/>
            <person name="Belle A."/>
            <person name="Dephoure N."/>
            <person name="O'Shea E.K."/>
            <person name="Weissman J.S."/>
        </authorList>
    </citation>
    <scope>LEVEL OF PROTEIN EXPRESSION [LARGE SCALE ANALYSIS]</scope>
</reference>
<reference key="11">
    <citation type="journal article" date="2007" name="Genomics">
        <title>Nine-amino-acid transactivation domain: establishment and prediction utilities.</title>
        <authorList>
            <person name="Piskacek S."/>
            <person name="Gregor M."/>
            <person name="Nemethova M."/>
            <person name="Grabner M."/>
            <person name="Kovarik P."/>
            <person name="Piskacek M."/>
        </authorList>
    </citation>
    <scope>DOMAIN</scope>
</reference>
<reference key="12">
    <citation type="journal article" date="2008" name="Mol. Cell. Proteomics">
        <title>A multidimensional chromatography technology for in-depth phosphoproteome analysis.</title>
        <authorList>
            <person name="Albuquerque C.P."/>
            <person name="Smolka M.B."/>
            <person name="Payne S.H."/>
            <person name="Bafna V."/>
            <person name="Eng J."/>
            <person name="Zhou H."/>
        </authorList>
    </citation>
    <scope>IDENTIFICATION BY MASS SPECTROMETRY [LARGE SCALE ANALYSIS]</scope>
</reference>
<reference key="13">
    <citation type="journal article" date="2009" name="Science">
        <title>Global analysis of Cdk1 substrate phosphorylation sites provides insights into evolution.</title>
        <authorList>
            <person name="Holt L.J."/>
            <person name="Tuch B.B."/>
            <person name="Villen J."/>
            <person name="Johnson A.D."/>
            <person name="Gygi S.P."/>
            <person name="Morgan D.O."/>
        </authorList>
    </citation>
    <scope>PHOSPHORYLATION [LARGE SCALE ANALYSIS] AT SER-155</scope>
    <scope>IDENTIFICATION BY MASS SPECTROMETRY [LARGE SCALE ANALYSIS]</scope>
</reference>
<name>OAF1_YEAST</name>